<sequence length="501" mass="55202">MARDLRGFIQLLETRGQLRRITAEVDPDLEVAEISNRMLQAGGPGLLFENVKGSPFPVAVNLMGTVERICWAMNMDHPLELEDLGKKLALLQQPKPPKKISQAIDFGKVLFDVLKAKPGRNFFPPCQEVVIDGENLDLNQIPLIRPYPGDAGKIITLGLVITKDCETGTPNVGVYRLQLQSKTTMTVHWLSVRGGARHLRKAAEQGKKLEVAIALGVDPLIIMAAATPIPVDLSEWLFAGLYGGSGVALAKCKTVDLEVPADSEFVLEGTITPGEMLPDGPFGDHMGYYGGVEDSPLVRFQCLTHRKNPVYLTTFSGRPPKEEAMMAIALNRIYTPILRQQVSEITDFFLPMEALSYKAAIISIDKAYPGQAKRAALAFWSALPQFTYTKFVIVVDKSINIRDPRQVVWAISSKVDPVRDVFILPETPFDSLDFASEKIGLGGRMGIDATTKIPPETDHEWGEVLESDPAMAEQVSQRWAEYGLGDINLTEVNPNLFGYDV</sequence>
<proteinExistence type="inferred from homology"/>
<name>Y936_SYNY3</name>
<dbReference type="EMBL" id="BA000022">
    <property type="protein sequence ID" value="BAA16877.1"/>
    <property type="molecule type" value="Genomic_DNA"/>
</dbReference>
<dbReference type="PIR" id="S74726">
    <property type="entry name" value="S74726"/>
</dbReference>
<dbReference type="SMR" id="P72861"/>
<dbReference type="FunCoup" id="P72861">
    <property type="interactions" value="89"/>
</dbReference>
<dbReference type="IntAct" id="P72861">
    <property type="interactions" value="1"/>
</dbReference>
<dbReference type="STRING" id="1148.gene:10497736"/>
<dbReference type="PaxDb" id="1148-1651951"/>
<dbReference type="EnsemblBacteria" id="BAA16877">
    <property type="protein sequence ID" value="BAA16877"/>
    <property type="gene ID" value="BAA16877"/>
</dbReference>
<dbReference type="KEGG" id="syn:sll0936"/>
<dbReference type="eggNOG" id="COG0043">
    <property type="taxonomic scope" value="Bacteria"/>
</dbReference>
<dbReference type="InParanoid" id="P72861"/>
<dbReference type="PhylomeDB" id="P72861"/>
<dbReference type="BioCyc" id="MetaCyc:MONOMER-19455"/>
<dbReference type="Proteomes" id="UP000001425">
    <property type="component" value="Chromosome"/>
</dbReference>
<dbReference type="GO" id="GO:0005737">
    <property type="term" value="C:cytoplasm"/>
    <property type="evidence" value="ECO:0000318"/>
    <property type="project" value="GO_Central"/>
</dbReference>
<dbReference type="GO" id="GO:0005829">
    <property type="term" value="C:cytosol"/>
    <property type="evidence" value="ECO:0000318"/>
    <property type="project" value="GO_Central"/>
</dbReference>
<dbReference type="GO" id="GO:0008694">
    <property type="term" value="F:3-octaprenyl-4-hydroxybenzoate carboxy-lyase activity"/>
    <property type="evidence" value="ECO:0000318"/>
    <property type="project" value="GO_Central"/>
</dbReference>
<dbReference type="GO" id="GO:0006744">
    <property type="term" value="P:ubiquinone biosynthetic process"/>
    <property type="evidence" value="ECO:0000318"/>
    <property type="project" value="GO_Central"/>
</dbReference>
<dbReference type="FunFam" id="1.20.5.570:FF:000001">
    <property type="entry name" value="3-octaprenyl-4-hydroxybenzoate carboxy-lyase"/>
    <property type="match status" value="1"/>
</dbReference>
<dbReference type="FunFam" id="3.40.1670.10:FF:000001">
    <property type="entry name" value="3-octaprenyl-4-hydroxybenzoate carboxy-lyase"/>
    <property type="match status" value="1"/>
</dbReference>
<dbReference type="Gene3D" id="1.20.5.570">
    <property type="entry name" value="Single helix bin"/>
    <property type="match status" value="1"/>
</dbReference>
<dbReference type="Gene3D" id="3.40.1670.10">
    <property type="entry name" value="UbiD C-terminal domain-like"/>
    <property type="match status" value="1"/>
</dbReference>
<dbReference type="InterPro" id="IPR002830">
    <property type="entry name" value="UbiD"/>
</dbReference>
<dbReference type="InterPro" id="IPR049381">
    <property type="entry name" value="UbiD-like_C"/>
</dbReference>
<dbReference type="InterPro" id="IPR049383">
    <property type="entry name" value="UbiD-like_N"/>
</dbReference>
<dbReference type="InterPro" id="IPR048304">
    <property type="entry name" value="UbiD_Rift_dom"/>
</dbReference>
<dbReference type="NCBIfam" id="TIGR00148">
    <property type="entry name" value="UbiD family decarboxylase"/>
    <property type="match status" value="1"/>
</dbReference>
<dbReference type="PANTHER" id="PTHR30108">
    <property type="entry name" value="3-OCTAPRENYL-4-HYDROXYBENZOATE CARBOXY-LYASE-RELATED"/>
    <property type="match status" value="1"/>
</dbReference>
<dbReference type="PANTHER" id="PTHR30108:SF17">
    <property type="entry name" value="FERULIC ACID DECARBOXYLASE 1"/>
    <property type="match status" value="1"/>
</dbReference>
<dbReference type="Pfam" id="PF01977">
    <property type="entry name" value="UbiD"/>
    <property type="match status" value="1"/>
</dbReference>
<dbReference type="Pfam" id="PF20696">
    <property type="entry name" value="UbiD_C"/>
    <property type="match status" value="1"/>
</dbReference>
<dbReference type="Pfam" id="PF20695">
    <property type="entry name" value="UbiD_N"/>
    <property type="match status" value="1"/>
</dbReference>
<dbReference type="SUPFAM" id="SSF50475">
    <property type="entry name" value="FMN-binding split barrel"/>
    <property type="match status" value="1"/>
</dbReference>
<dbReference type="SUPFAM" id="SSF143968">
    <property type="entry name" value="UbiD C-terminal domain-like"/>
    <property type="match status" value="1"/>
</dbReference>
<accession>P72861</accession>
<reference key="1">
    <citation type="journal article" date="1996" name="DNA Res.">
        <title>Sequence analysis of the genome of the unicellular cyanobacterium Synechocystis sp. strain PCC6803. II. Sequence determination of the entire genome and assignment of potential protein-coding regions.</title>
        <authorList>
            <person name="Kaneko T."/>
            <person name="Sato S."/>
            <person name="Kotani H."/>
            <person name="Tanaka A."/>
            <person name="Asamizu E."/>
            <person name="Nakamura Y."/>
            <person name="Miyajima N."/>
            <person name="Hirosawa M."/>
            <person name="Sugiura M."/>
            <person name="Sasamoto S."/>
            <person name="Kimura T."/>
            <person name="Hosouchi T."/>
            <person name="Matsuno A."/>
            <person name="Muraki A."/>
            <person name="Nakazaki N."/>
            <person name="Naruo K."/>
            <person name="Okumura S."/>
            <person name="Shimpo S."/>
            <person name="Takeuchi C."/>
            <person name="Wada T."/>
            <person name="Watanabe A."/>
            <person name="Yamada M."/>
            <person name="Yasuda M."/>
            <person name="Tabata S."/>
        </authorList>
    </citation>
    <scope>NUCLEOTIDE SEQUENCE [LARGE SCALE GENOMIC DNA]</scope>
    <source>
        <strain>ATCC 27184 / PCC 6803 / Kazusa</strain>
    </source>
</reference>
<feature type="chain" id="PRO_0000157378" description="Uncharacterized protein sll0936">
    <location>
        <begin position="1"/>
        <end position="501"/>
    </location>
</feature>
<organism>
    <name type="scientific">Synechocystis sp. (strain ATCC 27184 / PCC 6803 / Kazusa)</name>
    <dbReference type="NCBI Taxonomy" id="1111708"/>
    <lineage>
        <taxon>Bacteria</taxon>
        <taxon>Bacillati</taxon>
        <taxon>Cyanobacteriota</taxon>
        <taxon>Cyanophyceae</taxon>
        <taxon>Synechococcales</taxon>
        <taxon>Merismopediaceae</taxon>
        <taxon>Synechocystis</taxon>
    </lineage>
</organism>
<protein>
    <recommendedName>
        <fullName>Uncharacterized protein sll0936</fullName>
    </recommendedName>
</protein>
<evidence type="ECO:0000305" key="1"/>
<gene>
    <name type="ordered locus">sll0936</name>
</gene>
<keyword id="KW-1185">Reference proteome</keyword>
<comment type="similarity">
    <text evidence="1">Belongs to the UbiD family.</text>
</comment>